<keyword id="KW-0027">Amidation</keyword>
<keyword id="KW-0903">Direct protein sequencing</keyword>
<keyword id="KW-0964">Secreted</keyword>
<organism>
    <name type="scientific">Tityus obscurus</name>
    <name type="common">Amazonian scorpion</name>
    <name type="synonym">Tityus cambridgei</name>
    <dbReference type="NCBI Taxonomy" id="1221240"/>
    <lineage>
        <taxon>Eukaryota</taxon>
        <taxon>Metazoa</taxon>
        <taxon>Ecdysozoa</taxon>
        <taxon>Arthropoda</taxon>
        <taxon>Chelicerata</taxon>
        <taxon>Arachnida</taxon>
        <taxon>Scorpiones</taxon>
        <taxon>Buthida</taxon>
        <taxon>Buthoidea</taxon>
        <taxon>Buthidae</taxon>
        <taxon>Tityus</taxon>
    </lineage>
</organism>
<name>CRY22_TITOB</name>
<dbReference type="GO" id="GO:0005576">
    <property type="term" value="C:extracellular region"/>
    <property type="evidence" value="ECO:0007669"/>
    <property type="project" value="UniProtKB-SubCell"/>
</dbReference>
<reference key="1">
    <citation type="journal article" date="2018" name="J. Proteomics">
        <title>Profiling the short, linear, non-disulfide bond-containing peptidome from the venom of the scorpion Tityus obscurus.</title>
        <authorList>
            <person name="Dias N.B."/>
            <person name="de Souza B.M."/>
            <person name="Cocchi F.K."/>
            <person name="Chalkidis H.M."/>
            <person name="Dorce V.A.C."/>
            <person name="Palma M.S."/>
        </authorList>
    </citation>
    <scope>PROTEIN SEQUENCE</scope>
    <scope>IDENTIFICATION BY MASS SPECTROMETRY</scope>
    <scope>SUBCELLULAR LOCATION</scope>
    <scope>AMIDATION AT ARG-8</scope>
    <source>
        <tissue>Venom</tissue>
    </source>
</reference>
<accession>P0DRG7</accession>
<evidence type="ECO:0000269" key="1">
    <source>
    </source>
</evidence>
<evidence type="ECO:0000303" key="2">
    <source>
    </source>
</evidence>
<evidence type="ECO:0000305" key="3">
    <source>
    </source>
</evidence>
<comment type="subcellular location">
    <subcellularLocation>
        <location evidence="1">Secreted</location>
    </subcellularLocation>
</comment>
<comment type="tissue specificity">
    <text evidence="3">Expressed by the venom gland.</text>
</comment>
<protein>
    <recommendedName>
        <fullName evidence="2">Cryptide Pep-22</fullName>
    </recommendedName>
</protein>
<sequence length="8" mass="802">HGCIGCGR</sequence>
<proteinExistence type="evidence at protein level"/>
<feature type="peptide" id="PRO_0000461757" description="Cryptide Pep-22" evidence="1">
    <location>
        <begin position="1"/>
        <end position="8"/>
    </location>
</feature>
<feature type="modified residue" description="Arginine amide" evidence="1">
    <location>
        <position position="8"/>
    </location>
</feature>